<gene>
    <name evidence="1" type="primary">hisZ</name>
    <name type="ordered locus">BA_1424</name>
    <name type="ordered locus">GBAA_1424</name>
    <name type="ordered locus">BAS1315</name>
</gene>
<keyword id="KW-0028">Amino-acid biosynthesis</keyword>
<keyword id="KW-0963">Cytoplasm</keyword>
<keyword id="KW-0368">Histidine biosynthesis</keyword>
<keyword id="KW-1185">Reference proteome</keyword>
<protein>
    <recommendedName>
        <fullName evidence="1">ATP phosphoribosyltransferase regulatory subunit</fullName>
    </recommendedName>
</protein>
<comment type="function">
    <text evidence="1">Required for the first step of histidine biosynthesis. May allow the feedback regulation of ATP phosphoribosyltransferase activity by histidine.</text>
</comment>
<comment type="pathway">
    <text evidence="1">Amino-acid biosynthesis; L-histidine biosynthesis; L-histidine from 5-phospho-alpha-D-ribose 1-diphosphate: step 1/9.</text>
</comment>
<comment type="subunit">
    <text evidence="1">Heteromultimer composed of HisG and HisZ subunits.</text>
</comment>
<comment type="subcellular location">
    <subcellularLocation>
        <location evidence="1">Cytoplasm</location>
    </subcellularLocation>
</comment>
<comment type="miscellaneous">
    <text>This function is generally fulfilled by the C-terminal part of HisG, which is missing in some bacteria such as this one.</text>
</comment>
<comment type="similarity">
    <text evidence="1">Belongs to the class-II aminoacyl-tRNA synthetase family. HisZ subfamily.</text>
</comment>
<proteinExistence type="inferred from homology"/>
<dbReference type="EMBL" id="AE016879">
    <property type="protein sequence ID" value="AAP25367.1"/>
    <property type="molecule type" value="Genomic_DNA"/>
</dbReference>
<dbReference type="EMBL" id="AE017334">
    <property type="protein sequence ID" value="AAT30520.1"/>
    <property type="molecule type" value="Genomic_DNA"/>
</dbReference>
<dbReference type="EMBL" id="AE017225">
    <property type="protein sequence ID" value="AAT53635.1"/>
    <property type="molecule type" value="Genomic_DNA"/>
</dbReference>
<dbReference type="RefSeq" id="NP_843881.1">
    <property type="nucleotide sequence ID" value="NC_003997.3"/>
</dbReference>
<dbReference type="RefSeq" id="WP_000170328.1">
    <property type="nucleotide sequence ID" value="NZ_WXXJ01000017.1"/>
</dbReference>
<dbReference type="RefSeq" id="YP_027584.1">
    <property type="nucleotide sequence ID" value="NC_005945.1"/>
</dbReference>
<dbReference type="SMR" id="Q81T64"/>
<dbReference type="STRING" id="261594.GBAA_1424"/>
<dbReference type="DNASU" id="1085929"/>
<dbReference type="GeneID" id="45021403"/>
<dbReference type="KEGG" id="ban:BA_1424"/>
<dbReference type="KEGG" id="bar:GBAA_1424"/>
<dbReference type="KEGG" id="bat:BAS1315"/>
<dbReference type="PATRIC" id="fig|198094.11.peg.1397"/>
<dbReference type="eggNOG" id="COG3705">
    <property type="taxonomic scope" value="Bacteria"/>
</dbReference>
<dbReference type="HOGENOM" id="CLU_025113_0_0_9"/>
<dbReference type="OMA" id="ELVMPPM"/>
<dbReference type="OrthoDB" id="9800814at2"/>
<dbReference type="UniPathway" id="UPA00031">
    <property type="reaction ID" value="UER00006"/>
</dbReference>
<dbReference type="Proteomes" id="UP000000427">
    <property type="component" value="Chromosome"/>
</dbReference>
<dbReference type="Proteomes" id="UP000000594">
    <property type="component" value="Chromosome"/>
</dbReference>
<dbReference type="GO" id="GO:0005737">
    <property type="term" value="C:cytoplasm"/>
    <property type="evidence" value="ECO:0007669"/>
    <property type="project" value="UniProtKB-SubCell"/>
</dbReference>
<dbReference type="GO" id="GO:0140096">
    <property type="term" value="F:catalytic activity, acting on a protein"/>
    <property type="evidence" value="ECO:0007669"/>
    <property type="project" value="UniProtKB-ARBA"/>
</dbReference>
<dbReference type="GO" id="GO:0004821">
    <property type="term" value="F:histidine-tRNA ligase activity"/>
    <property type="evidence" value="ECO:0007669"/>
    <property type="project" value="TreeGrafter"/>
</dbReference>
<dbReference type="GO" id="GO:0016740">
    <property type="term" value="F:transferase activity"/>
    <property type="evidence" value="ECO:0007669"/>
    <property type="project" value="UniProtKB-ARBA"/>
</dbReference>
<dbReference type="GO" id="GO:0006427">
    <property type="term" value="P:histidyl-tRNA aminoacylation"/>
    <property type="evidence" value="ECO:0007669"/>
    <property type="project" value="TreeGrafter"/>
</dbReference>
<dbReference type="GO" id="GO:0000105">
    <property type="term" value="P:L-histidine biosynthetic process"/>
    <property type="evidence" value="ECO:0007669"/>
    <property type="project" value="UniProtKB-UniRule"/>
</dbReference>
<dbReference type="CDD" id="cd00773">
    <property type="entry name" value="HisRS-like_core"/>
    <property type="match status" value="1"/>
</dbReference>
<dbReference type="FunFam" id="3.30.930.10:FF:000060">
    <property type="entry name" value="ATP phosphoribosyltransferase regulatory subunit"/>
    <property type="match status" value="1"/>
</dbReference>
<dbReference type="Gene3D" id="3.30.930.10">
    <property type="entry name" value="Bira Bifunctional Protein, Domain 2"/>
    <property type="match status" value="1"/>
</dbReference>
<dbReference type="HAMAP" id="MF_00125">
    <property type="entry name" value="HisZ"/>
    <property type="match status" value="1"/>
</dbReference>
<dbReference type="InterPro" id="IPR006195">
    <property type="entry name" value="aa-tRNA-synth_II"/>
</dbReference>
<dbReference type="InterPro" id="IPR045864">
    <property type="entry name" value="aa-tRNA-synth_II/BPL/LPL"/>
</dbReference>
<dbReference type="InterPro" id="IPR041715">
    <property type="entry name" value="HisRS-like_core"/>
</dbReference>
<dbReference type="InterPro" id="IPR004516">
    <property type="entry name" value="HisRS/HisZ"/>
</dbReference>
<dbReference type="InterPro" id="IPR004517">
    <property type="entry name" value="HisZ"/>
</dbReference>
<dbReference type="NCBIfam" id="TIGR00443">
    <property type="entry name" value="hisZ_biosyn_reg"/>
    <property type="match status" value="1"/>
</dbReference>
<dbReference type="NCBIfam" id="NF008938">
    <property type="entry name" value="PRK12292.1-6"/>
    <property type="match status" value="1"/>
</dbReference>
<dbReference type="PANTHER" id="PTHR43707:SF6">
    <property type="entry name" value="ATP PHOSPHORIBOSYLTRANSFERASE REGULATORY SUBUNIT"/>
    <property type="match status" value="1"/>
</dbReference>
<dbReference type="PANTHER" id="PTHR43707">
    <property type="entry name" value="HISTIDYL-TRNA SYNTHETASE"/>
    <property type="match status" value="1"/>
</dbReference>
<dbReference type="Pfam" id="PF13393">
    <property type="entry name" value="tRNA-synt_His"/>
    <property type="match status" value="1"/>
</dbReference>
<dbReference type="PIRSF" id="PIRSF001549">
    <property type="entry name" value="His-tRNA_synth"/>
    <property type="match status" value="1"/>
</dbReference>
<dbReference type="SUPFAM" id="SSF55681">
    <property type="entry name" value="Class II aaRS and biotin synthetases"/>
    <property type="match status" value="1"/>
</dbReference>
<dbReference type="PROSITE" id="PS50862">
    <property type="entry name" value="AA_TRNA_LIGASE_II"/>
    <property type="match status" value="1"/>
</dbReference>
<name>HISZ_BACAN</name>
<evidence type="ECO:0000255" key="1">
    <source>
        <dbReference type="HAMAP-Rule" id="MF_00125"/>
    </source>
</evidence>
<sequence length="420" mass="48830">MTKWKRANPNGTRDYLFEECTLIEEVEQKLRRTFLERGYEEIRTPTIEFYDVFAFQSRPIDEEKMYKFFDEKGRIIVLRPDMTIPLARVVGTQRCDTPLKVTYSGNVFRANESLAGKYNEIVQSGIEVIGIDNVRAEIECVISVIQSLQKLRVQSFTIEIGQVQLYKCIVKKLSIHEEEEKFLRTYIESKNYASLSNFIRDKKLDRCDETVKLLEKLPRLFGNLEVIEEAEKLASSNEMKMAITRVKEIYEAIEKLGYGSYISIDLGTIQHLDYYTGVIFKGYIYEIGEEIVSGGRYDELIGNFGEMLPAVGLAVQVNQIVKALQEQQEPYERKRIDIMIHYELNRLAEAERLRNLLQKDGKKVALSLFSNLNDTFQFARKNQIVTVVEAKSESLVEYVWKEKWVVQKEGETSCVTFKLR</sequence>
<accession>Q81T64</accession>
<accession>Q6I1E7</accession>
<accession>Q6KV93</accession>
<organism>
    <name type="scientific">Bacillus anthracis</name>
    <dbReference type="NCBI Taxonomy" id="1392"/>
    <lineage>
        <taxon>Bacteria</taxon>
        <taxon>Bacillati</taxon>
        <taxon>Bacillota</taxon>
        <taxon>Bacilli</taxon>
        <taxon>Bacillales</taxon>
        <taxon>Bacillaceae</taxon>
        <taxon>Bacillus</taxon>
        <taxon>Bacillus cereus group</taxon>
    </lineage>
</organism>
<feature type="chain" id="PRO_0000171022" description="ATP phosphoribosyltransferase regulatory subunit">
    <location>
        <begin position="1"/>
        <end position="420"/>
    </location>
</feature>
<reference key="1">
    <citation type="journal article" date="2003" name="Nature">
        <title>The genome sequence of Bacillus anthracis Ames and comparison to closely related bacteria.</title>
        <authorList>
            <person name="Read T.D."/>
            <person name="Peterson S.N."/>
            <person name="Tourasse N.J."/>
            <person name="Baillie L.W."/>
            <person name="Paulsen I.T."/>
            <person name="Nelson K.E."/>
            <person name="Tettelin H."/>
            <person name="Fouts D.E."/>
            <person name="Eisen J.A."/>
            <person name="Gill S.R."/>
            <person name="Holtzapple E.K."/>
            <person name="Okstad O.A."/>
            <person name="Helgason E."/>
            <person name="Rilstone J."/>
            <person name="Wu M."/>
            <person name="Kolonay J.F."/>
            <person name="Beanan M.J."/>
            <person name="Dodson R.J."/>
            <person name="Brinkac L.M."/>
            <person name="Gwinn M.L."/>
            <person name="DeBoy R.T."/>
            <person name="Madpu R."/>
            <person name="Daugherty S.C."/>
            <person name="Durkin A.S."/>
            <person name="Haft D.H."/>
            <person name="Nelson W.C."/>
            <person name="Peterson J.D."/>
            <person name="Pop M."/>
            <person name="Khouri H.M."/>
            <person name="Radune D."/>
            <person name="Benton J.L."/>
            <person name="Mahamoud Y."/>
            <person name="Jiang L."/>
            <person name="Hance I.R."/>
            <person name="Weidman J.F."/>
            <person name="Berry K.J."/>
            <person name="Plaut R.D."/>
            <person name="Wolf A.M."/>
            <person name="Watkins K.L."/>
            <person name="Nierman W.C."/>
            <person name="Hazen A."/>
            <person name="Cline R.T."/>
            <person name="Redmond C."/>
            <person name="Thwaite J.E."/>
            <person name="White O."/>
            <person name="Salzberg S.L."/>
            <person name="Thomason B."/>
            <person name="Friedlander A.M."/>
            <person name="Koehler T.M."/>
            <person name="Hanna P.C."/>
            <person name="Kolstoe A.-B."/>
            <person name="Fraser C.M."/>
        </authorList>
    </citation>
    <scope>NUCLEOTIDE SEQUENCE [LARGE SCALE GENOMIC DNA]</scope>
    <source>
        <strain>Ames / isolate Porton</strain>
    </source>
</reference>
<reference key="2">
    <citation type="journal article" date="2009" name="J. Bacteriol.">
        <title>The complete genome sequence of Bacillus anthracis Ames 'Ancestor'.</title>
        <authorList>
            <person name="Ravel J."/>
            <person name="Jiang L."/>
            <person name="Stanley S.T."/>
            <person name="Wilson M.R."/>
            <person name="Decker R.S."/>
            <person name="Read T.D."/>
            <person name="Worsham P."/>
            <person name="Keim P.S."/>
            <person name="Salzberg S.L."/>
            <person name="Fraser-Liggett C.M."/>
            <person name="Rasko D.A."/>
        </authorList>
    </citation>
    <scope>NUCLEOTIDE SEQUENCE [LARGE SCALE GENOMIC DNA]</scope>
    <source>
        <strain>Ames ancestor</strain>
    </source>
</reference>
<reference key="3">
    <citation type="submission" date="2004-01" db="EMBL/GenBank/DDBJ databases">
        <title>Complete genome sequence of Bacillus anthracis Sterne.</title>
        <authorList>
            <person name="Brettin T.S."/>
            <person name="Bruce D."/>
            <person name="Challacombe J.F."/>
            <person name="Gilna P."/>
            <person name="Han C."/>
            <person name="Hill K."/>
            <person name="Hitchcock P."/>
            <person name="Jackson P."/>
            <person name="Keim P."/>
            <person name="Longmire J."/>
            <person name="Lucas S."/>
            <person name="Okinaka R."/>
            <person name="Richardson P."/>
            <person name="Rubin E."/>
            <person name="Tice H."/>
        </authorList>
    </citation>
    <scope>NUCLEOTIDE SEQUENCE [LARGE SCALE GENOMIC DNA]</scope>
    <source>
        <strain>Sterne</strain>
    </source>
</reference>